<protein>
    <recommendedName>
        <fullName>Membrane-anchored ubiquitin-fold protein 1</fullName>
        <shortName>AtMUB1</shortName>
        <shortName>Membrane-anchored ub-fold protein 1</shortName>
    </recommendedName>
</protein>
<evidence type="ECO:0000255" key="1"/>
<evidence type="ECO:0000255" key="2">
    <source>
        <dbReference type="PROSITE-ProRule" id="PRU00214"/>
    </source>
</evidence>
<evidence type="ECO:0000269" key="3">
    <source>
    </source>
</evidence>
<evidence type="ECO:0007829" key="4">
    <source>
        <dbReference type="PDB" id="1SE9"/>
    </source>
</evidence>
<comment type="function">
    <text>May serve as docking site to facilitate the association of other proteins to the plasma membrane.</text>
</comment>
<comment type="subcellular location">
    <subcellularLocation>
        <location evidence="3">Cell membrane</location>
        <topology evidence="3">Lipid-anchor</topology>
    </subcellularLocation>
</comment>
<comment type="miscellaneous">
    <text>Heat stable and remains soluble at temperatures exceeding 90 degrees Celsius.</text>
</comment>
<reference key="1">
    <citation type="journal article" date="2000" name="Nature">
        <title>Sequence and analysis of chromosome 3 of the plant Arabidopsis thaliana.</title>
        <authorList>
            <person name="Salanoubat M."/>
            <person name="Lemcke K."/>
            <person name="Rieger M."/>
            <person name="Ansorge W."/>
            <person name="Unseld M."/>
            <person name="Fartmann B."/>
            <person name="Valle G."/>
            <person name="Bloecker H."/>
            <person name="Perez-Alonso M."/>
            <person name="Obermaier B."/>
            <person name="Delseny M."/>
            <person name="Boutry M."/>
            <person name="Grivell L.A."/>
            <person name="Mache R."/>
            <person name="Puigdomenech P."/>
            <person name="De Simone V."/>
            <person name="Choisne N."/>
            <person name="Artiguenave F."/>
            <person name="Robert C."/>
            <person name="Brottier P."/>
            <person name="Wincker P."/>
            <person name="Cattolico L."/>
            <person name="Weissenbach J."/>
            <person name="Saurin W."/>
            <person name="Quetier F."/>
            <person name="Schaefer M."/>
            <person name="Mueller-Auer S."/>
            <person name="Gabel C."/>
            <person name="Fuchs M."/>
            <person name="Benes V."/>
            <person name="Wurmbach E."/>
            <person name="Drzonek H."/>
            <person name="Erfle H."/>
            <person name="Jordan N."/>
            <person name="Bangert S."/>
            <person name="Wiedelmann R."/>
            <person name="Kranz H."/>
            <person name="Voss H."/>
            <person name="Holland R."/>
            <person name="Brandt P."/>
            <person name="Nyakatura G."/>
            <person name="Vezzi A."/>
            <person name="D'Angelo M."/>
            <person name="Pallavicini A."/>
            <person name="Toppo S."/>
            <person name="Simionati B."/>
            <person name="Conrad A."/>
            <person name="Hornischer K."/>
            <person name="Kauer G."/>
            <person name="Loehnert T.-H."/>
            <person name="Nordsiek G."/>
            <person name="Reichelt J."/>
            <person name="Scharfe M."/>
            <person name="Schoen O."/>
            <person name="Bargues M."/>
            <person name="Terol J."/>
            <person name="Climent J."/>
            <person name="Navarro P."/>
            <person name="Collado C."/>
            <person name="Perez-Perez A."/>
            <person name="Ottenwaelder B."/>
            <person name="Duchemin D."/>
            <person name="Cooke R."/>
            <person name="Laudie M."/>
            <person name="Berger-Llauro C."/>
            <person name="Purnelle B."/>
            <person name="Masuy D."/>
            <person name="de Haan M."/>
            <person name="Maarse A.C."/>
            <person name="Alcaraz J.-P."/>
            <person name="Cottet A."/>
            <person name="Casacuberta E."/>
            <person name="Monfort A."/>
            <person name="Argiriou A."/>
            <person name="Flores M."/>
            <person name="Liguori R."/>
            <person name="Vitale D."/>
            <person name="Mannhaupt G."/>
            <person name="Haase D."/>
            <person name="Schoof H."/>
            <person name="Rudd S."/>
            <person name="Zaccaria P."/>
            <person name="Mewes H.-W."/>
            <person name="Mayer K.F.X."/>
            <person name="Kaul S."/>
            <person name="Town C.D."/>
            <person name="Koo H.L."/>
            <person name="Tallon L.J."/>
            <person name="Jenkins J."/>
            <person name="Rooney T."/>
            <person name="Rizzo M."/>
            <person name="Walts A."/>
            <person name="Utterback T."/>
            <person name="Fujii C.Y."/>
            <person name="Shea T.P."/>
            <person name="Creasy T.H."/>
            <person name="Haas B."/>
            <person name="Maiti R."/>
            <person name="Wu D."/>
            <person name="Peterson J."/>
            <person name="Van Aken S."/>
            <person name="Pai G."/>
            <person name="Militscher J."/>
            <person name="Sellers P."/>
            <person name="Gill J.E."/>
            <person name="Feldblyum T.V."/>
            <person name="Preuss D."/>
            <person name="Lin X."/>
            <person name="Nierman W.C."/>
            <person name="Salzberg S.L."/>
            <person name="White O."/>
            <person name="Venter J.C."/>
            <person name="Fraser C.M."/>
            <person name="Kaneko T."/>
            <person name="Nakamura Y."/>
            <person name="Sato S."/>
            <person name="Kato T."/>
            <person name="Asamizu E."/>
            <person name="Sasamoto S."/>
            <person name="Kimura T."/>
            <person name="Idesawa K."/>
            <person name="Kawashima K."/>
            <person name="Kishida Y."/>
            <person name="Kiyokawa C."/>
            <person name="Kohara M."/>
            <person name="Matsumoto M."/>
            <person name="Matsuno A."/>
            <person name="Muraki A."/>
            <person name="Nakayama S."/>
            <person name="Nakazaki N."/>
            <person name="Shinpo S."/>
            <person name="Takeuchi C."/>
            <person name="Wada T."/>
            <person name="Watanabe A."/>
            <person name="Yamada M."/>
            <person name="Yasuda M."/>
            <person name="Tabata S."/>
        </authorList>
    </citation>
    <scope>NUCLEOTIDE SEQUENCE [LARGE SCALE GENOMIC DNA]</scope>
    <source>
        <strain>cv. Columbia</strain>
    </source>
</reference>
<reference key="2">
    <citation type="journal article" date="2017" name="Plant J.">
        <title>Araport11: a complete reannotation of the Arabidopsis thaliana reference genome.</title>
        <authorList>
            <person name="Cheng C.Y."/>
            <person name="Krishnakumar V."/>
            <person name="Chan A.P."/>
            <person name="Thibaud-Nissen F."/>
            <person name="Schobel S."/>
            <person name="Town C.D."/>
        </authorList>
    </citation>
    <scope>GENOME REANNOTATION</scope>
    <source>
        <strain>cv. Columbia</strain>
    </source>
</reference>
<reference key="3">
    <citation type="submission" date="2004-04" db="EMBL/GenBank/DDBJ databases">
        <title>Arabidopsis ORF clones.</title>
        <authorList>
            <person name="Shinn P."/>
            <person name="Chen H."/>
            <person name="Cheuk R.F."/>
            <person name="Kim C.J."/>
            <person name="Ecker J.R."/>
        </authorList>
    </citation>
    <scope>NUCLEOTIDE SEQUENCE [LARGE SCALE MRNA]</scope>
    <source>
        <strain>cv. Columbia</strain>
    </source>
</reference>
<reference key="4">
    <citation type="journal article" date="2006" name="J. Biol. Chem.">
        <title>MUBS: a family of ubiquitin-fold proteins that are plasma membrane-anchored by prenylation.</title>
        <authorList>
            <person name="Downes B.P."/>
            <person name="Saracco S.A."/>
            <person name="Lee S.S."/>
            <person name="Crowell D.N."/>
            <person name="Vierstra R.D."/>
        </authorList>
    </citation>
    <scope>IDENTIFICATION</scope>
    <scope>NOMENCLATURE</scope>
    <scope>ISOPRENYLATION AT CYS-114</scope>
    <scope>METHYLATION AT CYS-114</scope>
    <scope>MUTAGENESIS OF CYS-114</scope>
    <scope>SUBCELLULAR LOCATION</scope>
</reference>
<reference key="5">
    <citation type="journal article" date="2004" name="Nat. Methods">
        <title>Cell-free protein production and labeling protocol for NMR-based structural proteomics.</title>
        <authorList>
            <person name="Vinarov D.A."/>
            <person name="Lytle B.L."/>
            <person name="Peterson F.C."/>
            <person name="Tyler E.M."/>
            <person name="Volkman B.F."/>
            <person name="Markley J.L."/>
        </authorList>
    </citation>
    <scope>STRUCTURE BY NMR OF 2-117</scope>
</reference>
<keyword id="KW-0002">3D-structure</keyword>
<keyword id="KW-1003">Cell membrane</keyword>
<keyword id="KW-0449">Lipoprotein</keyword>
<keyword id="KW-0472">Membrane</keyword>
<keyword id="KW-0488">Methylation</keyword>
<keyword id="KW-0564">Palmitate</keyword>
<keyword id="KW-0636">Prenylation</keyword>
<keyword id="KW-1185">Reference proteome</keyword>
<accession>Q9MAB9</accession>
<gene>
    <name type="primary">MUB1</name>
    <name type="ordered locus">At3g01050</name>
    <name type="ORF">T4P13.27</name>
</gene>
<sequence>MAEVHNQLEIKFRLTDGSDIGPKAFPDATTVSALKETVISEWPREKENGPKTVKEVKLISAGKVLENSKTVKDYRSPVSNLAGAVTTMHVIIQAPVTEKEKKPKGDPKMNKCVCSVM</sequence>
<feature type="chain" id="PRO_0000114927" description="Membrane-anchored ubiquitin-fold protein 1">
    <location>
        <begin position="1"/>
        <end position="114"/>
    </location>
</feature>
<feature type="propeptide" id="PRO_0000248163" description="Removed in mature form">
    <location>
        <begin position="115"/>
        <end position="117"/>
    </location>
</feature>
<feature type="domain" description="Ubiquitin-like" evidence="2">
    <location>
        <begin position="8"/>
        <end position="74"/>
    </location>
</feature>
<feature type="modified residue" description="Cysteine methyl ester" evidence="3">
    <location>
        <position position="114"/>
    </location>
</feature>
<feature type="lipid moiety-binding region" description="S-palmitoyl cysteine" evidence="1">
    <location>
        <position position="112"/>
    </location>
</feature>
<feature type="lipid moiety-binding region" description="S-farnesyl cysteine" evidence="3">
    <location>
        <position position="114"/>
    </location>
</feature>
<feature type="mutagenesis site" description="Loss of prenylation and membrane localization." evidence="3">
    <original>C</original>
    <variation>S</variation>
    <location>
        <position position="114"/>
    </location>
</feature>
<feature type="strand" evidence="4">
    <location>
        <begin position="8"/>
        <end position="14"/>
    </location>
</feature>
<feature type="strand" evidence="4">
    <location>
        <begin position="19"/>
        <end position="25"/>
    </location>
</feature>
<feature type="helix" evidence="4">
    <location>
        <begin position="31"/>
        <end position="41"/>
    </location>
</feature>
<feature type="strand" evidence="4">
    <location>
        <begin position="47"/>
        <end position="49"/>
    </location>
</feature>
<feature type="helix" evidence="4">
    <location>
        <begin position="53"/>
        <end position="55"/>
    </location>
</feature>
<feature type="strand" evidence="4">
    <location>
        <begin position="56"/>
        <end position="60"/>
    </location>
</feature>
<feature type="helix" evidence="4">
    <location>
        <begin position="71"/>
        <end position="74"/>
    </location>
</feature>
<feature type="strand" evidence="4">
    <location>
        <begin position="86"/>
        <end position="92"/>
    </location>
</feature>
<organism>
    <name type="scientific">Arabidopsis thaliana</name>
    <name type="common">Mouse-ear cress</name>
    <dbReference type="NCBI Taxonomy" id="3702"/>
    <lineage>
        <taxon>Eukaryota</taxon>
        <taxon>Viridiplantae</taxon>
        <taxon>Streptophyta</taxon>
        <taxon>Embryophyta</taxon>
        <taxon>Tracheophyta</taxon>
        <taxon>Spermatophyta</taxon>
        <taxon>Magnoliopsida</taxon>
        <taxon>eudicotyledons</taxon>
        <taxon>Gunneridae</taxon>
        <taxon>Pentapetalae</taxon>
        <taxon>rosids</taxon>
        <taxon>malvids</taxon>
        <taxon>Brassicales</taxon>
        <taxon>Brassicaceae</taxon>
        <taxon>Camelineae</taxon>
        <taxon>Arabidopsis</taxon>
    </lineage>
</organism>
<proteinExistence type="evidence at protein level"/>
<name>MUB1_ARATH</name>
<dbReference type="EMBL" id="AC008261">
    <property type="protein sequence ID" value="AAF26169.1"/>
    <property type="molecule type" value="Genomic_DNA"/>
</dbReference>
<dbReference type="EMBL" id="CP002686">
    <property type="protein sequence ID" value="AEE73600.1"/>
    <property type="molecule type" value="Genomic_DNA"/>
</dbReference>
<dbReference type="EMBL" id="CP002686">
    <property type="protein sequence ID" value="ANM65143.1"/>
    <property type="molecule type" value="Genomic_DNA"/>
</dbReference>
<dbReference type="EMBL" id="CP002686">
    <property type="protein sequence ID" value="ANM65144.1"/>
    <property type="molecule type" value="Genomic_DNA"/>
</dbReference>
<dbReference type="EMBL" id="CP002686">
    <property type="protein sequence ID" value="ANM65145.1"/>
    <property type="molecule type" value="Genomic_DNA"/>
</dbReference>
<dbReference type="EMBL" id="CP002686">
    <property type="protein sequence ID" value="ANM65146.1"/>
    <property type="molecule type" value="Genomic_DNA"/>
</dbReference>
<dbReference type="EMBL" id="BT010661">
    <property type="protein sequence ID" value="AAR20718.1"/>
    <property type="molecule type" value="mRNA"/>
</dbReference>
<dbReference type="EMBL" id="BT012419">
    <property type="protein sequence ID" value="AAS92335.1"/>
    <property type="molecule type" value="mRNA"/>
</dbReference>
<dbReference type="RefSeq" id="NP_001319438.1">
    <property type="nucleotide sequence ID" value="NM_001337306.1"/>
</dbReference>
<dbReference type="RefSeq" id="NP_001327137.1">
    <property type="nucleotide sequence ID" value="NM_001337308.1"/>
</dbReference>
<dbReference type="RefSeq" id="NP_001327138.1">
    <property type="nucleotide sequence ID" value="NM_001337307.1"/>
</dbReference>
<dbReference type="RefSeq" id="NP_001327139.1">
    <property type="nucleotide sequence ID" value="NM_001337309.1"/>
</dbReference>
<dbReference type="RefSeq" id="NP_186754.1">
    <property type="nucleotide sequence ID" value="NM_110970.2"/>
</dbReference>
<dbReference type="PDB" id="1SE9">
    <property type="method" value="NMR"/>
    <property type="chains" value="A=2-117"/>
</dbReference>
<dbReference type="PDBsum" id="1SE9"/>
<dbReference type="BMRB" id="Q9MAB9"/>
<dbReference type="SMR" id="Q9MAB9"/>
<dbReference type="BioGRID" id="6640">
    <property type="interactions" value="7"/>
</dbReference>
<dbReference type="FunCoup" id="Q9MAB9">
    <property type="interactions" value="237"/>
</dbReference>
<dbReference type="IntAct" id="Q9MAB9">
    <property type="interactions" value="2"/>
</dbReference>
<dbReference type="STRING" id="3702.Q9MAB9"/>
<dbReference type="PaxDb" id="3702-AT3G01050.1"/>
<dbReference type="ProteomicsDB" id="238655"/>
<dbReference type="EnsemblPlants" id="AT3G01050.1">
    <property type="protein sequence ID" value="AT3G01050.1"/>
    <property type="gene ID" value="AT3G01050"/>
</dbReference>
<dbReference type="EnsemblPlants" id="AT3G01050.2">
    <property type="protein sequence ID" value="AT3G01050.2"/>
    <property type="gene ID" value="AT3G01050"/>
</dbReference>
<dbReference type="EnsemblPlants" id="AT3G01050.3">
    <property type="protein sequence ID" value="AT3G01050.3"/>
    <property type="gene ID" value="AT3G01050"/>
</dbReference>
<dbReference type="EnsemblPlants" id="AT3G01050.4">
    <property type="protein sequence ID" value="AT3G01050.4"/>
    <property type="gene ID" value="AT3G01050"/>
</dbReference>
<dbReference type="EnsemblPlants" id="AT3G01050.5">
    <property type="protein sequence ID" value="AT3G01050.5"/>
    <property type="gene ID" value="AT3G01050"/>
</dbReference>
<dbReference type="GeneID" id="821307"/>
<dbReference type="Gramene" id="AT3G01050.1">
    <property type="protein sequence ID" value="AT3G01050.1"/>
    <property type="gene ID" value="AT3G01050"/>
</dbReference>
<dbReference type="Gramene" id="AT3G01050.2">
    <property type="protein sequence ID" value="AT3G01050.2"/>
    <property type="gene ID" value="AT3G01050"/>
</dbReference>
<dbReference type="Gramene" id="AT3G01050.3">
    <property type="protein sequence ID" value="AT3G01050.3"/>
    <property type="gene ID" value="AT3G01050"/>
</dbReference>
<dbReference type="Gramene" id="AT3G01050.4">
    <property type="protein sequence ID" value="AT3G01050.4"/>
    <property type="gene ID" value="AT3G01050"/>
</dbReference>
<dbReference type="Gramene" id="AT3G01050.5">
    <property type="protein sequence ID" value="AT3G01050.5"/>
    <property type="gene ID" value="AT3G01050"/>
</dbReference>
<dbReference type="KEGG" id="ath:AT3G01050"/>
<dbReference type="Araport" id="AT3G01050"/>
<dbReference type="TAIR" id="AT3G01050">
    <property type="gene designation" value="MUB1"/>
</dbReference>
<dbReference type="eggNOG" id="ENOG502RZYK">
    <property type="taxonomic scope" value="Eukaryota"/>
</dbReference>
<dbReference type="HOGENOM" id="CLU_136465_1_0_1"/>
<dbReference type="InParanoid" id="Q9MAB9"/>
<dbReference type="OMA" id="WPKETEN"/>
<dbReference type="OrthoDB" id="1043111at2759"/>
<dbReference type="PhylomeDB" id="Q9MAB9"/>
<dbReference type="EvolutionaryTrace" id="Q9MAB9"/>
<dbReference type="PRO" id="PR:Q9MAB9"/>
<dbReference type="Proteomes" id="UP000006548">
    <property type="component" value="Chromosome 3"/>
</dbReference>
<dbReference type="ExpressionAtlas" id="Q9MAB9">
    <property type="expression patterns" value="baseline and differential"/>
</dbReference>
<dbReference type="GO" id="GO:0005886">
    <property type="term" value="C:plasma membrane"/>
    <property type="evidence" value="ECO:0007669"/>
    <property type="project" value="UniProtKB-SubCell"/>
</dbReference>
<dbReference type="CDD" id="cd01814">
    <property type="entry name" value="Ubl_MUBs_plant"/>
    <property type="match status" value="1"/>
</dbReference>
<dbReference type="DisProt" id="DP02643"/>
<dbReference type="Gene3D" id="3.10.20.90">
    <property type="entry name" value="Phosphatidylinositol 3-kinase Catalytic Subunit, Chain A, domain 1"/>
    <property type="match status" value="1"/>
</dbReference>
<dbReference type="InterPro" id="IPR017000">
    <property type="entry name" value="MUB"/>
</dbReference>
<dbReference type="InterPro" id="IPR000626">
    <property type="entry name" value="Ubiquitin-like_dom"/>
</dbReference>
<dbReference type="InterPro" id="IPR029071">
    <property type="entry name" value="Ubiquitin-like_domsf"/>
</dbReference>
<dbReference type="InterPro" id="IPR040015">
    <property type="entry name" value="UBL3-like"/>
</dbReference>
<dbReference type="InterPro" id="IPR039540">
    <property type="entry name" value="UBL3-like_ubiquitin_dom"/>
</dbReference>
<dbReference type="PANTHER" id="PTHR13169:SF10">
    <property type="entry name" value="MEMBRANE-ANCHORED UBIQUITIN-FOLD PROTEIN 1"/>
    <property type="match status" value="1"/>
</dbReference>
<dbReference type="PANTHER" id="PTHR13169">
    <property type="entry name" value="UBIQUITIN-LIKE PROTEIN 3 HCG-1 PROTEIN"/>
    <property type="match status" value="1"/>
</dbReference>
<dbReference type="Pfam" id="PF13881">
    <property type="entry name" value="Rad60-SLD_2"/>
    <property type="match status" value="1"/>
</dbReference>
<dbReference type="PIRSF" id="PIRSF032572">
    <property type="entry name" value="MUB"/>
    <property type="match status" value="1"/>
</dbReference>
<dbReference type="SUPFAM" id="SSF54236">
    <property type="entry name" value="Ubiquitin-like"/>
    <property type="match status" value="1"/>
</dbReference>
<dbReference type="PROSITE" id="PS50053">
    <property type="entry name" value="UBIQUITIN_2"/>
    <property type="match status" value="1"/>
</dbReference>